<keyword id="KW-0044">Antibiotic</keyword>
<keyword id="KW-0929">Antimicrobial</keyword>
<keyword id="KW-1203">Blood coagulation cascade inhibiting toxin</keyword>
<keyword id="KW-0106">Calcium</keyword>
<keyword id="KW-1015">Disulfide bond</keyword>
<keyword id="KW-1199">Hemostasis impairing toxin</keyword>
<keyword id="KW-0378">Hydrolase</keyword>
<keyword id="KW-0382">Hypotensive agent</keyword>
<keyword id="KW-0442">Lipid degradation</keyword>
<keyword id="KW-0443">Lipid metabolism</keyword>
<keyword id="KW-0479">Metal-binding</keyword>
<keyword id="KW-1201">Platelet aggregation inhibiting toxin</keyword>
<keyword id="KW-0964">Secreted</keyword>
<keyword id="KW-0732">Signal</keyword>
<keyword id="KW-0800">Toxin</keyword>
<sequence length="138" mass="15680">MRTLWIVAVLLLGVEGNLWQFEMLIMKIAKTSGFLFYSSYGCYCGWGGHGRPQDATDRCCFVHDCCYGKVTGCNPKTDSYTYSEENGDVVCGGDDPCKKQICECDRVAATCFRDNKDTYDNKYWFYPAKNCQEESEPC</sequence>
<organism>
    <name type="scientific">Bothrops moojeni</name>
    <name type="common">Lance-headed viper</name>
    <name type="synonym">Caissaca</name>
    <dbReference type="NCBI Taxonomy" id="98334"/>
    <lineage>
        <taxon>Eukaryota</taxon>
        <taxon>Metazoa</taxon>
        <taxon>Chordata</taxon>
        <taxon>Craniata</taxon>
        <taxon>Vertebrata</taxon>
        <taxon>Euteleostomi</taxon>
        <taxon>Lepidosauria</taxon>
        <taxon>Squamata</taxon>
        <taxon>Bifurcata</taxon>
        <taxon>Unidentata</taxon>
        <taxon>Episquamata</taxon>
        <taxon>Toxicofera</taxon>
        <taxon>Serpentes</taxon>
        <taxon>Colubroidea</taxon>
        <taxon>Viperidae</taxon>
        <taxon>Crotalinae</taxon>
        <taxon>Bothrops</taxon>
    </lineage>
</organism>
<evidence type="ECO:0000250" key="1"/>
<evidence type="ECO:0000250" key="2">
    <source>
        <dbReference type="UniProtKB" id="O42191"/>
    </source>
</evidence>
<evidence type="ECO:0000250" key="3">
    <source>
        <dbReference type="UniProtKB" id="P06859"/>
    </source>
</evidence>
<evidence type="ECO:0000255" key="4">
    <source>
        <dbReference type="PROSITE-ProRule" id="PRU10035"/>
    </source>
</evidence>
<evidence type="ECO:0000255" key="5">
    <source>
        <dbReference type="PROSITE-ProRule" id="PRU10036"/>
    </source>
</evidence>
<evidence type="ECO:0000269" key="6">
    <source>
    </source>
</evidence>
<evidence type="ECO:0000305" key="7"/>
<evidence type="ECO:0000305" key="8">
    <source>
    </source>
</evidence>
<proteinExistence type="evidence at protein level"/>
<comment type="function">
    <text evidence="6">Snake venom phospholipase A2 (PLA2) that inhibits ADP- and collagen-induced platelet aggregation, has edema-inducing, anti-coagulant activity, antibacterial activity, and cytotoxic activity. In vivo, has a hypotensive effect. PLA2 catalyzes the calcium-dependent hydrolysis of the 2-acyl groups in 3-sn-phosphoglycerides.</text>
</comment>
<comment type="catalytic activity">
    <reaction evidence="4 5">
        <text>a 1,2-diacyl-sn-glycero-3-phosphocholine + H2O = a 1-acyl-sn-glycero-3-phosphocholine + a fatty acid + H(+)</text>
        <dbReference type="Rhea" id="RHEA:15801"/>
        <dbReference type="ChEBI" id="CHEBI:15377"/>
        <dbReference type="ChEBI" id="CHEBI:15378"/>
        <dbReference type="ChEBI" id="CHEBI:28868"/>
        <dbReference type="ChEBI" id="CHEBI:57643"/>
        <dbReference type="ChEBI" id="CHEBI:58168"/>
        <dbReference type="EC" id="3.1.1.4"/>
    </reaction>
</comment>
<comment type="cofactor">
    <cofactor evidence="1">
        <name>Ca(2+)</name>
        <dbReference type="ChEBI" id="CHEBI:29108"/>
    </cofactor>
    <text evidence="1">Binds 1 Ca(2+) ion.</text>
</comment>
<comment type="subcellular location">
    <subcellularLocation>
        <location>Secreted</location>
    </subcellularLocation>
</comment>
<comment type="tissue specificity">
    <text>Expressed by the venom gland.</text>
</comment>
<comment type="mass spectrometry" mass="13601.0" method="MALDI" evidence="6">
    <text>Average mass.</text>
</comment>
<comment type="miscellaneous">
    <text evidence="8">Negative results: does not show myotoxic activity.</text>
</comment>
<comment type="similarity">
    <text evidence="7">Belongs to the phospholipase A2 family. Group II subfamily. D49 sub-subfamily.</text>
</comment>
<reference key="1">
    <citation type="journal article" date="2013" name="J. Pharm. Biomed. Anal.">
        <title>Isolation and expression of a hypotensive and anti-platelet acidic phospholipase A(2) from Bothrops moojeni snake venom.</title>
        <authorList>
            <person name="Silveira L.B."/>
            <person name="Marchi-Salvador D.P."/>
            <person name="Santos-Filho N.A."/>
            <person name="Silva F.P. Jr."/>
            <person name="Marcussi S."/>
            <person name="Fuly A.L."/>
            <person name="Nomizo A."/>
            <person name="da Silva S.L."/>
            <person name="Stabeli R.G."/>
            <person name="Arantes E.C."/>
            <person name="Soares A.M."/>
        </authorList>
    </citation>
    <scope>NUCLEOTIDE SEQUENCE [MRNA]</scope>
    <scope>FUNCTION</scope>
    <scope>MASS SPECTROMETRY</scope>
    <source>
        <tissue>Venom</tissue>
        <tissue>Venom gland</tissue>
    </source>
</reference>
<name>PA2A_BOTMO</name>
<protein>
    <recommendedName>
        <fullName>Acidic phospholipase A2 BmooPLA2</fullName>
        <shortName>svPLA2</shortName>
        <ecNumber>3.1.1.4</ecNumber>
    </recommendedName>
    <alternativeName>
        <fullName>Phosphatidylcholine 2-acylhydrolase</fullName>
    </alternativeName>
</protein>
<dbReference type="EC" id="3.1.1.4"/>
<dbReference type="EMBL" id="HQ327311">
    <property type="protein sequence ID" value="ADQ08654.1"/>
    <property type="molecule type" value="mRNA"/>
</dbReference>
<dbReference type="SMR" id="G3DT18"/>
<dbReference type="GO" id="GO:0005576">
    <property type="term" value="C:extracellular region"/>
    <property type="evidence" value="ECO:0007669"/>
    <property type="project" value="UniProtKB-SubCell"/>
</dbReference>
<dbReference type="GO" id="GO:0005509">
    <property type="term" value="F:calcium ion binding"/>
    <property type="evidence" value="ECO:0007669"/>
    <property type="project" value="InterPro"/>
</dbReference>
<dbReference type="GO" id="GO:0047498">
    <property type="term" value="F:calcium-dependent phospholipase A2 activity"/>
    <property type="evidence" value="ECO:0007669"/>
    <property type="project" value="TreeGrafter"/>
</dbReference>
<dbReference type="GO" id="GO:0005543">
    <property type="term" value="F:phospholipid binding"/>
    <property type="evidence" value="ECO:0007669"/>
    <property type="project" value="TreeGrafter"/>
</dbReference>
<dbReference type="GO" id="GO:0090729">
    <property type="term" value="F:toxin activity"/>
    <property type="evidence" value="ECO:0007669"/>
    <property type="project" value="UniProtKB-KW"/>
</dbReference>
<dbReference type="GO" id="GO:0050482">
    <property type="term" value="P:arachidonate secretion"/>
    <property type="evidence" value="ECO:0007669"/>
    <property type="project" value="InterPro"/>
</dbReference>
<dbReference type="GO" id="GO:0042742">
    <property type="term" value="P:defense response to bacterium"/>
    <property type="evidence" value="ECO:0007669"/>
    <property type="project" value="UniProtKB-KW"/>
</dbReference>
<dbReference type="GO" id="GO:0016042">
    <property type="term" value="P:lipid catabolic process"/>
    <property type="evidence" value="ECO:0007669"/>
    <property type="project" value="UniProtKB-KW"/>
</dbReference>
<dbReference type="GO" id="GO:0042130">
    <property type="term" value="P:negative regulation of T cell proliferation"/>
    <property type="evidence" value="ECO:0007669"/>
    <property type="project" value="TreeGrafter"/>
</dbReference>
<dbReference type="GO" id="GO:0006644">
    <property type="term" value="P:phospholipid metabolic process"/>
    <property type="evidence" value="ECO:0007669"/>
    <property type="project" value="InterPro"/>
</dbReference>
<dbReference type="GO" id="GO:0008217">
    <property type="term" value="P:regulation of blood pressure"/>
    <property type="evidence" value="ECO:0007669"/>
    <property type="project" value="UniProtKB-KW"/>
</dbReference>
<dbReference type="CDD" id="cd00125">
    <property type="entry name" value="PLA2c"/>
    <property type="match status" value="1"/>
</dbReference>
<dbReference type="FunFam" id="1.20.90.10:FF:000001">
    <property type="entry name" value="Basic phospholipase A2 homolog"/>
    <property type="match status" value="1"/>
</dbReference>
<dbReference type="Gene3D" id="1.20.90.10">
    <property type="entry name" value="Phospholipase A2 domain"/>
    <property type="match status" value="1"/>
</dbReference>
<dbReference type="InterPro" id="IPR001211">
    <property type="entry name" value="PLipase_A2"/>
</dbReference>
<dbReference type="InterPro" id="IPR033112">
    <property type="entry name" value="PLipase_A2_Asp_AS"/>
</dbReference>
<dbReference type="InterPro" id="IPR016090">
    <property type="entry name" value="PLipase_A2_dom"/>
</dbReference>
<dbReference type="InterPro" id="IPR036444">
    <property type="entry name" value="PLipase_A2_dom_sf"/>
</dbReference>
<dbReference type="InterPro" id="IPR033113">
    <property type="entry name" value="PLipase_A2_His_AS"/>
</dbReference>
<dbReference type="PANTHER" id="PTHR11716">
    <property type="entry name" value="PHOSPHOLIPASE A2 FAMILY MEMBER"/>
    <property type="match status" value="1"/>
</dbReference>
<dbReference type="PANTHER" id="PTHR11716:SF9">
    <property type="entry name" value="PHOSPHOLIPASE A2, MEMBRANE ASSOCIATED"/>
    <property type="match status" value="1"/>
</dbReference>
<dbReference type="Pfam" id="PF00068">
    <property type="entry name" value="Phospholip_A2_1"/>
    <property type="match status" value="1"/>
</dbReference>
<dbReference type="PRINTS" id="PR00389">
    <property type="entry name" value="PHPHLIPASEA2"/>
</dbReference>
<dbReference type="SMART" id="SM00085">
    <property type="entry name" value="PA2c"/>
    <property type="match status" value="1"/>
</dbReference>
<dbReference type="SUPFAM" id="SSF48619">
    <property type="entry name" value="Phospholipase A2, PLA2"/>
    <property type="match status" value="1"/>
</dbReference>
<dbReference type="PROSITE" id="PS00119">
    <property type="entry name" value="PA2_ASP"/>
    <property type="match status" value="1"/>
</dbReference>
<dbReference type="PROSITE" id="PS00118">
    <property type="entry name" value="PA2_HIS"/>
    <property type="match status" value="1"/>
</dbReference>
<accession>G3DT18</accession>
<feature type="signal peptide" evidence="1">
    <location>
        <begin position="1"/>
        <end position="16"/>
    </location>
</feature>
<feature type="chain" id="PRO_5000793120" description="Acidic phospholipase A2 BmooPLA2">
    <location>
        <begin position="17"/>
        <end position="138"/>
    </location>
</feature>
<feature type="active site" evidence="3">
    <location>
        <position position="63"/>
    </location>
</feature>
<feature type="active site" evidence="3">
    <location>
        <position position="105"/>
    </location>
</feature>
<feature type="binding site" evidence="2">
    <location>
        <position position="43"/>
    </location>
    <ligand>
        <name>Ca(2+)</name>
        <dbReference type="ChEBI" id="CHEBI:29108"/>
    </ligand>
</feature>
<feature type="binding site" evidence="2">
    <location>
        <position position="45"/>
    </location>
    <ligand>
        <name>Ca(2+)</name>
        <dbReference type="ChEBI" id="CHEBI:29108"/>
    </ligand>
</feature>
<feature type="binding site" evidence="2">
    <location>
        <position position="47"/>
    </location>
    <ligand>
        <name>Ca(2+)</name>
        <dbReference type="ChEBI" id="CHEBI:29108"/>
    </ligand>
</feature>
<feature type="binding site" evidence="2">
    <location>
        <position position="64"/>
    </location>
    <ligand>
        <name>Ca(2+)</name>
        <dbReference type="ChEBI" id="CHEBI:29108"/>
    </ligand>
</feature>
<feature type="disulfide bond" evidence="2">
    <location>
        <begin position="42"/>
        <end position="131"/>
    </location>
</feature>
<feature type="disulfide bond" evidence="2">
    <location>
        <begin position="44"/>
        <end position="60"/>
    </location>
</feature>
<feature type="disulfide bond" evidence="2">
    <location>
        <begin position="59"/>
        <end position="111"/>
    </location>
</feature>
<feature type="disulfide bond" evidence="2">
    <location>
        <begin position="65"/>
        <end position="138"/>
    </location>
</feature>
<feature type="disulfide bond" evidence="2">
    <location>
        <begin position="66"/>
        <end position="104"/>
    </location>
</feature>
<feature type="disulfide bond" evidence="2">
    <location>
        <begin position="73"/>
        <end position="97"/>
    </location>
</feature>
<feature type="disulfide bond" evidence="2">
    <location>
        <begin position="91"/>
        <end position="102"/>
    </location>
</feature>